<keyword id="KW-0221">Differentiation</keyword>
<keyword id="KW-1185">Reference proteome</keyword>
<keyword id="KW-0677">Repeat</keyword>
<keyword id="KW-0744">Spermatogenesis</keyword>
<evidence type="ECO:0000250" key="1">
    <source>
        <dbReference type="UniProtKB" id="Q3URY6"/>
    </source>
</evidence>
<evidence type="ECO:0000250" key="2">
    <source>
        <dbReference type="UniProtKB" id="Q8NEN0"/>
    </source>
</evidence>
<evidence type="ECO:0000256" key="3">
    <source>
        <dbReference type="SAM" id="MobiDB-lite"/>
    </source>
</evidence>
<evidence type="ECO:0000305" key="4"/>
<organism>
    <name type="scientific">Bos taurus</name>
    <name type="common">Bovine</name>
    <dbReference type="NCBI Taxonomy" id="9913"/>
    <lineage>
        <taxon>Eukaryota</taxon>
        <taxon>Metazoa</taxon>
        <taxon>Chordata</taxon>
        <taxon>Craniata</taxon>
        <taxon>Vertebrata</taxon>
        <taxon>Euteleostomi</taxon>
        <taxon>Mammalia</taxon>
        <taxon>Eutheria</taxon>
        <taxon>Laurasiatheria</taxon>
        <taxon>Artiodactyla</taxon>
        <taxon>Ruminantia</taxon>
        <taxon>Pecora</taxon>
        <taxon>Bovidae</taxon>
        <taxon>Bovinae</taxon>
        <taxon>Bos</taxon>
    </lineage>
</organism>
<feature type="chain" id="PRO_0000325089" description="Armadillo repeat-containing protein 2">
    <location>
        <begin position="1"/>
        <end position="865"/>
    </location>
</feature>
<feature type="repeat" description="ARM 1">
    <location>
        <begin position="261"/>
        <end position="300"/>
    </location>
</feature>
<feature type="repeat" description="ARM 2">
    <location>
        <begin position="303"/>
        <end position="343"/>
    </location>
</feature>
<feature type="repeat" description="ARM 3">
    <location>
        <begin position="362"/>
        <end position="402"/>
    </location>
</feature>
<feature type="repeat" description="ARM 4">
    <location>
        <begin position="407"/>
        <end position="448"/>
    </location>
</feature>
<feature type="repeat" description="ARM 5">
    <location>
        <begin position="461"/>
        <end position="502"/>
    </location>
</feature>
<feature type="repeat" description="ARM 6">
    <location>
        <begin position="505"/>
        <end position="546"/>
    </location>
</feature>
<feature type="repeat" description="ARM 7">
    <location>
        <begin position="550"/>
        <end position="587"/>
    </location>
</feature>
<feature type="repeat" description="ARM 8">
    <location>
        <begin position="589"/>
        <end position="614"/>
    </location>
</feature>
<feature type="repeat" description="ARM 9">
    <location>
        <begin position="617"/>
        <end position="660"/>
    </location>
</feature>
<feature type="repeat" description="ARM 10">
    <location>
        <begin position="662"/>
        <end position="703"/>
    </location>
</feature>
<feature type="repeat" description="ARM 11">
    <location>
        <begin position="705"/>
        <end position="744"/>
    </location>
</feature>
<feature type="repeat" description="ARM 12">
    <location>
        <begin position="746"/>
        <end position="788"/>
    </location>
</feature>
<feature type="region of interest" description="Disordered" evidence="3">
    <location>
        <begin position="39"/>
        <end position="75"/>
    </location>
</feature>
<feature type="region of interest" description="Disordered" evidence="3">
    <location>
        <begin position="214"/>
        <end position="243"/>
    </location>
</feature>
<feature type="compositionally biased region" description="Polar residues" evidence="3">
    <location>
        <begin position="60"/>
        <end position="75"/>
    </location>
</feature>
<gene>
    <name evidence="2" type="primary">ARMC2</name>
</gene>
<dbReference type="EMBL" id="AAFC03035656">
    <property type="status" value="NOT_ANNOTATED_CDS"/>
    <property type="molecule type" value="Genomic_DNA"/>
</dbReference>
<dbReference type="EMBL" id="AAFC03035657">
    <property type="status" value="NOT_ANNOTATED_CDS"/>
    <property type="molecule type" value="Genomic_DNA"/>
</dbReference>
<dbReference type="EMBL" id="AAFC03090721">
    <property type="status" value="NOT_ANNOTATED_CDS"/>
    <property type="molecule type" value="Genomic_DNA"/>
</dbReference>
<dbReference type="EMBL" id="AAFC03090723">
    <property type="status" value="NOT_ANNOTATED_CDS"/>
    <property type="molecule type" value="Genomic_DNA"/>
</dbReference>
<dbReference type="EMBL" id="AAFC03090729">
    <property type="status" value="NOT_ANNOTATED_CDS"/>
    <property type="molecule type" value="Genomic_DNA"/>
</dbReference>
<dbReference type="RefSeq" id="NP_001069269.2">
    <property type="nucleotide sequence ID" value="NM_001075801.2"/>
</dbReference>
<dbReference type="RefSeq" id="XP_024852382.1">
    <property type="nucleotide sequence ID" value="XM_024996614.2"/>
</dbReference>
<dbReference type="RefSeq" id="XP_024852383.1">
    <property type="nucleotide sequence ID" value="XM_024996615.2"/>
</dbReference>
<dbReference type="RefSeq" id="XP_059745681.1">
    <property type="nucleotide sequence ID" value="XM_059889698.1"/>
</dbReference>
<dbReference type="RefSeq" id="XP_059745683.1">
    <property type="nucleotide sequence ID" value="XM_059889700.1"/>
</dbReference>
<dbReference type="SMR" id="P0C6R2"/>
<dbReference type="FunCoup" id="P0C6R2">
    <property type="interactions" value="540"/>
</dbReference>
<dbReference type="STRING" id="9913.ENSBTAP00000006360"/>
<dbReference type="PaxDb" id="9913-ENSBTAP00000006360"/>
<dbReference type="Ensembl" id="ENSBTAT00000006360.6">
    <property type="protein sequence ID" value="ENSBTAP00000006360.6"/>
    <property type="gene ID" value="ENSBTAG00000036087.5"/>
</dbReference>
<dbReference type="GeneID" id="520151"/>
<dbReference type="KEGG" id="bta:520151"/>
<dbReference type="CTD" id="84071"/>
<dbReference type="VEuPathDB" id="HostDB:ENSBTAG00000036087"/>
<dbReference type="VGNC" id="VGNC:58440">
    <property type="gene designation" value="ARMC2"/>
</dbReference>
<dbReference type="eggNOG" id="KOG1048">
    <property type="taxonomic scope" value="Eukaryota"/>
</dbReference>
<dbReference type="GeneTree" id="ENSGT00390000000663"/>
<dbReference type="InParanoid" id="P0C6R2"/>
<dbReference type="OMA" id="EACIYAY"/>
<dbReference type="OrthoDB" id="247006at2759"/>
<dbReference type="Proteomes" id="UP000009136">
    <property type="component" value="Chromosome 9"/>
</dbReference>
<dbReference type="Bgee" id="ENSBTAG00000036087">
    <property type="expression patterns" value="Expressed in oocyte and 109 other cell types or tissues"/>
</dbReference>
<dbReference type="GO" id="GO:0000902">
    <property type="term" value="P:cell morphogenesis"/>
    <property type="evidence" value="ECO:0007669"/>
    <property type="project" value="Ensembl"/>
</dbReference>
<dbReference type="GO" id="GO:0044782">
    <property type="term" value="P:cilium organization"/>
    <property type="evidence" value="ECO:0000318"/>
    <property type="project" value="GO_Central"/>
</dbReference>
<dbReference type="GO" id="GO:0006997">
    <property type="term" value="P:nucleus organization"/>
    <property type="evidence" value="ECO:0007669"/>
    <property type="project" value="Ensembl"/>
</dbReference>
<dbReference type="GO" id="GO:0007288">
    <property type="term" value="P:sperm axoneme assembly"/>
    <property type="evidence" value="ECO:0000250"/>
    <property type="project" value="UniProtKB"/>
</dbReference>
<dbReference type="Gene3D" id="1.25.10.10">
    <property type="entry name" value="Leucine-rich Repeat Variant"/>
    <property type="match status" value="2"/>
</dbReference>
<dbReference type="InterPro" id="IPR011989">
    <property type="entry name" value="ARM-like"/>
</dbReference>
<dbReference type="InterPro" id="IPR016024">
    <property type="entry name" value="ARM-type_fold"/>
</dbReference>
<dbReference type="InterPro" id="IPR000225">
    <property type="entry name" value="Armadillo"/>
</dbReference>
<dbReference type="InterPro" id="IPR038905">
    <property type="entry name" value="ARMC2"/>
</dbReference>
<dbReference type="PANTHER" id="PTHR21356">
    <property type="entry name" value="ARMADILLO REPEAT CONTAINING 2"/>
    <property type="match status" value="1"/>
</dbReference>
<dbReference type="PANTHER" id="PTHR21356:SF1">
    <property type="entry name" value="ARMADILLO REPEAT-CONTAINING PROTEIN 2"/>
    <property type="match status" value="1"/>
</dbReference>
<dbReference type="SMART" id="SM00185">
    <property type="entry name" value="ARM"/>
    <property type="match status" value="5"/>
</dbReference>
<dbReference type="SUPFAM" id="SSF48371">
    <property type="entry name" value="ARM repeat"/>
    <property type="match status" value="1"/>
</dbReference>
<proteinExistence type="inferred from homology"/>
<protein>
    <recommendedName>
        <fullName evidence="4">Armadillo repeat-containing protein 2</fullName>
    </recommendedName>
</protein>
<accession>P0C6R2</accession>
<sequence>MLSPNDKKLEKLDPFYLPSLSKQKTSAEIVSEARNALRTVRTQRPFTPREDQRKLFGPASSRTPENRPPSSFSVHASSFEFSDSRPISGTRLSPLEFKPKAPASPDTVEDFCLSFPKPPVDPAKIRRISSARARLFRVASQGALLPARTLLPTQPTRVESEETVTTRDSVVKINGIYLTESKAIGHLKRHPLQLTYDGDFSKITEQEMFKGATSVPFHLRSGGDQGKRRPRASSSSRSPDQSRLDIRAGSKADLQEKNTEIEVDEVFWNTRIVPILHDLEKEENIEMVCATCTQLHHALEEGNMLGNKFKRRSVLLKTLYKLVDVGSDLLSLKLAKIILALKVSGKNLLNVCKLIFKISRSEKNDSLIRNDSILESLLEVLRSEDLQANTEAFLYCMGTIKFISGNPEFLHEMMGKGAVEILMSLIKQVNENTKKSGTCLPNSGHLLVQMTATLRNLVDSPLARSKLLSINALPQLCTVMEQHIGDKDVCTNIARIFSKLTSYHDCCVALASYSRCYALFLNLINKYQKKQDLVVRVVFILGNLTAKNNQAREQFSKEKGSIPTLLSLFHTFYKLDLHSGKRWGEGDERPEARRPAQAEDVLIKLTRVLANLAIHPGVGPAIAAHSHIVGLLLATLESKSIDDCEELVINTTATINNLSYYKVKNSIIQDRKLYIAELLLKLLVSNNMDGILEAVRVFGNLSQDHDICDFIVQKNVHKFMIALLDAKHQDICFSACGVLLNLTVDRDKRLILKEGGGIKKLVDCLRDFGPTDWQLASLVCKTLWNFSENITNAASCFGDEAANTLLALLSSFLDEELALNGSFDQDLKNYHKLHWETEFRPVAQQLLNRIKNHHTFLEPLPIPSF</sequence>
<name>ARMC2_BOVIN</name>
<comment type="function">
    <text evidence="1">Required for sperm flagellum axoneme organization and function. Involved in axonemal central pair complex assembly and/or stability.</text>
</comment>
<reference key="1">
    <citation type="journal article" date="2009" name="Science">
        <title>The genome sequence of taurine cattle: a window to ruminant biology and evolution.</title>
        <authorList>
            <consortium name="The bovine genome sequencing and analysis consortium"/>
        </authorList>
    </citation>
    <scope>NUCLEOTIDE SEQUENCE [LARGE SCALE GENOMIC DNA]</scope>
    <source>
        <strain>Hereford</strain>
    </source>
</reference>